<reference key="1">
    <citation type="submission" date="1994-08" db="EMBL/GenBank/DDBJ databases">
        <title>Molecular evolution of the sec appartus in plastids.</title>
        <authorList>
            <person name="Valentin K.-U."/>
            <person name="Fischer S."/>
            <person name="Vogel H."/>
        </authorList>
    </citation>
    <scope>NUCLEOTIDE SEQUENCE [GENOMIC DNA]</scope>
</reference>
<proteinExistence type="inferred from homology"/>
<protein>
    <recommendedName>
        <fullName evidence="1">Protein translocase subunit SecA</fullName>
        <ecNumber evidence="1">7.4.2.8</ecNumber>
    </recommendedName>
</protein>
<accession>Q32743</accession>
<gene>
    <name evidence="1" type="primary">secA</name>
</gene>
<organism>
    <name type="scientific">Olisthodiscus luteus</name>
    <name type="common">Marine phytoflagellate</name>
    <dbReference type="NCBI Taxonomy" id="83000"/>
    <lineage>
        <taxon>Eukaryota</taxon>
        <taxon>Sar</taxon>
        <taxon>Stramenopiles</taxon>
        <taxon>Ochrophyta</taxon>
        <taxon>Olisthodiscophyceae</taxon>
        <taxon>Olisthodiscaceae</taxon>
        <taxon>Olisthodiscus</taxon>
    </lineage>
</organism>
<evidence type="ECO:0000255" key="1">
    <source>
        <dbReference type="HAMAP-Rule" id="MF_01382"/>
    </source>
</evidence>
<comment type="function">
    <text evidence="1">Has a central role in coupling the hydrolysis of ATP to the transfer of proteins across the thylakoid membrane.</text>
</comment>
<comment type="catalytic activity">
    <reaction evidence="1">
        <text>ATP + H2O + cellular proteinSide 1 = ADP + phosphate + cellular proteinSide 2.</text>
        <dbReference type="EC" id="7.4.2.8"/>
    </reaction>
</comment>
<comment type="subcellular location">
    <subcellularLocation>
        <location evidence="1">Plastid</location>
        <location evidence="1">Chloroplast stroma</location>
    </subcellularLocation>
    <subcellularLocation>
        <location evidence="1">Plastid</location>
        <location evidence="1">Chloroplast thylakoid membrane</location>
        <topology evidence="1">Peripheral membrane protein</topology>
    </subcellularLocation>
    <text evidence="1">A minor fraction is associated with the chloroplast thylakoid membrane.</text>
</comment>
<comment type="similarity">
    <text evidence="1">Belongs to the SecA family.</text>
</comment>
<name>SECA_OLILU</name>
<sequence>MFNFLENEKYKLKEYQPLVNQINLLETSVKNYTDIELKEQFDKLRKEYFLSQNFSNDIIARSFSLTREAAFRTIGLRPFDQQLLGGLVLNSGKITEMKTGEGKTLVATLPAALNAISGRGVHIVTVNDYLAKRDSTWMGQIYDYLGLTVGLVQSQMESQERKDNYFQDITYITNSELGFDYLRDNQVKTFQEMVQRKFNYCIIDEVDAILIDEARTPLVLSIPDTIHNPKIYLDANTTAKSLIRDVDFKADEKTKNITFTDIGIDKIEYFRKIPNIYGTNAGFLFYLQNAISANIFFRKNSEYIIENNKIAIVDEFTGRVMPVRRWSNGLHEAIEAKESIDITQTSRISSSITYQNFFTLYPKLAGMTGTAKSAALELESIYNLEVVVIPTSKKFQRKDLPDKVYTNDFAKWKAIAKECFEIHKTGRPILVGTSSIEKSDFVSFLLENYKLQYNVLNARPENLKYESEIVGEAGCLNAITIATNMAGRGTDIILGGSPGFKIIRLLKILVLKVKLKEARTKKGLFLTHELYKELQKERLNYDAITQLVKFETEFGQKQIVRQKKLSTLFFYLKINYKSRFKKQKQYINQLGGLYVIGTERQDSKRIDNQLRGRAGRQGDAGSSRFFVSIEDKIFRLFGDNKFSNLFNQLNLTNEEISLESDLITKTLDNTQERVENYYYDIRKQVYDYDELITEQRKTFYLFRSKVLKTQVSGNLIIASTEDVIKKIVKSIKTPQLKFTNLTHKQENQIILEDFEQCRRIMRYALPPINLKQINASNHNVLFEFLMQEFWISYDIHKTKAFSSIGEEYYKEYERSCVLESIDHGWSTNLEKMETIRESIVWRVYAQKDPLAEYKKEGFSTFRKMDEEMKRFLVFAVFDTDFYVT</sequence>
<dbReference type="EC" id="7.4.2.8" evidence="1"/>
<dbReference type="EMBL" id="Z35718">
    <property type="protein sequence ID" value="CAA84793.1"/>
    <property type="molecule type" value="Genomic_DNA"/>
</dbReference>
<dbReference type="PIR" id="S49216">
    <property type="entry name" value="S49216"/>
</dbReference>
<dbReference type="SMR" id="Q32743"/>
<dbReference type="GO" id="GO:0009570">
    <property type="term" value="C:chloroplast stroma"/>
    <property type="evidence" value="ECO:0007669"/>
    <property type="project" value="UniProtKB-SubCell"/>
</dbReference>
<dbReference type="GO" id="GO:0009535">
    <property type="term" value="C:chloroplast thylakoid membrane"/>
    <property type="evidence" value="ECO:0007669"/>
    <property type="project" value="UniProtKB-SubCell"/>
</dbReference>
<dbReference type="GO" id="GO:0005524">
    <property type="term" value="F:ATP binding"/>
    <property type="evidence" value="ECO:0007669"/>
    <property type="project" value="UniProtKB-UniRule"/>
</dbReference>
<dbReference type="GO" id="GO:0008564">
    <property type="term" value="F:protein-exporting ATPase activity"/>
    <property type="evidence" value="ECO:0007669"/>
    <property type="project" value="UniProtKB-EC"/>
</dbReference>
<dbReference type="GO" id="GO:0065002">
    <property type="term" value="P:intracellular protein transmembrane transport"/>
    <property type="evidence" value="ECO:0007669"/>
    <property type="project" value="UniProtKB-UniRule"/>
</dbReference>
<dbReference type="GO" id="GO:0017038">
    <property type="term" value="P:protein import"/>
    <property type="evidence" value="ECO:0007669"/>
    <property type="project" value="InterPro"/>
</dbReference>
<dbReference type="GO" id="GO:0006605">
    <property type="term" value="P:protein targeting"/>
    <property type="evidence" value="ECO:0007669"/>
    <property type="project" value="UniProtKB-UniRule"/>
</dbReference>
<dbReference type="CDD" id="cd17928">
    <property type="entry name" value="DEXDc_SecA"/>
    <property type="match status" value="1"/>
</dbReference>
<dbReference type="CDD" id="cd18803">
    <property type="entry name" value="SF2_C_secA"/>
    <property type="match status" value="1"/>
</dbReference>
<dbReference type="Gene3D" id="1.10.3060.10">
    <property type="entry name" value="Helical scaffold and wing domains of SecA"/>
    <property type="match status" value="1"/>
</dbReference>
<dbReference type="Gene3D" id="3.40.50.300">
    <property type="entry name" value="P-loop containing nucleotide triphosphate hydrolases"/>
    <property type="match status" value="2"/>
</dbReference>
<dbReference type="Gene3D" id="3.90.1440.10">
    <property type="entry name" value="SecA, preprotein cross-linking domain"/>
    <property type="match status" value="1"/>
</dbReference>
<dbReference type="HAMAP" id="MF_01382">
    <property type="entry name" value="SecA"/>
    <property type="match status" value="1"/>
</dbReference>
<dbReference type="InterPro" id="IPR014001">
    <property type="entry name" value="Helicase_ATP-bd"/>
</dbReference>
<dbReference type="InterPro" id="IPR027417">
    <property type="entry name" value="P-loop_NTPase"/>
</dbReference>
<dbReference type="InterPro" id="IPR000185">
    <property type="entry name" value="SecA"/>
</dbReference>
<dbReference type="InterPro" id="IPR020937">
    <property type="entry name" value="SecA_CS"/>
</dbReference>
<dbReference type="InterPro" id="IPR011115">
    <property type="entry name" value="SecA_DEAD"/>
</dbReference>
<dbReference type="InterPro" id="IPR014018">
    <property type="entry name" value="SecA_motor_DEAD"/>
</dbReference>
<dbReference type="InterPro" id="IPR011130">
    <property type="entry name" value="SecA_preprotein_X-link_dom"/>
</dbReference>
<dbReference type="InterPro" id="IPR044722">
    <property type="entry name" value="SecA_SF2_C"/>
</dbReference>
<dbReference type="InterPro" id="IPR011116">
    <property type="entry name" value="SecA_Wing/Scaffold"/>
</dbReference>
<dbReference type="InterPro" id="IPR036266">
    <property type="entry name" value="SecA_Wing/Scaffold_sf"/>
</dbReference>
<dbReference type="InterPro" id="IPR036670">
    <property type="entry name" value="SecA_X-link_sf"/>
</dbReference>
<dbReference type="NCBIfam" id="NF009538">
    <property type="entry name" value="PRK12904.1"/>
    <property type="match status" value="1"/>
</dbReference>
<dbReference type="NCBIfam" id="TIGR00963">
    <property type="entry name" value="secA"/>
    <property type="match status" value="1"/>
</dbReference>
<dbReference type="PANTHER" id="PTHR30612:SF0">
    <property type="entry name" value="CHLOROPLAST PROTEIN-TRANSPORTING ATPASE"/>
    <property type="match status" value="1"/>
</dbReference>
<dbReference type="PANTHER" id="PTHR30612">
    <property type="entry name" value="SECA INNER MEMBRANE COMPONENT OF SEC PROTEIN SECRETION SYSTEM"/>
    <property type="match status" value="1"/>
</dbReference>
<dbReference type="Pfam" id="PF21090">
    <property type="entry name" value="P-loop_SecA"/>
    <property type="match status" value="1"/>
</dbReference>
<dbReference type="Pfam" id="PF07517">
    <property type="entry name" value="SecA_DEAD"/>
    <property type="match status" value="1"/>
</dbReference>
<dbReference type="Pfam" id="PF01043">
    <property type="entry name" value="SecA_PP_bind"/>
    <property type="match status" value="1"/>
</dbReference>
<dbReference type="Pfam" id="PF07516">
    <property type="entry name" value="SecA_SW"/>
    <property type="match status" value="1"/>
</dbReference>
<dbReference type="PRINTS" id="PR00906">
    <property type="entry name" value="SECA"/>
</dbReference>
<dbReference type="SMART" id="SM00957">
    <property type="entry name" value="SecA_DEAD"/>
    <property type="match status" value="1"/>
</dbReference>
<dbReference type="SMART" id="SM00958">
    <property type="entry name" value="SecA_PP_bind"/>
    <property type="match status" value="1"/>
</dbReference>
<dbReference type="SUPFAM" id="SSF81886">
    <property type="entry name" value="Helical scaffold and wing domains of SecA"/>
    <property type="match status" value="1"/>
</dbReference>
<dbReference type="SUPFAM" id="SSF52540">
    <property type="entry name" value="P-loop containing nucleoside triphosphate hydrolases"/>
    <property type="match status" value="2"/>
</dbReference>
<dbReference type="SUPFAM" id="SSF81767">
    <property type="entry name" value="Pre-protein crosslinking domain of SecA"/>
    <property type="match status" value="1"/>
</dbReference>
<dbReference type="PROSITE" id="PS01312">
    <property type="entry name" value="SECA"/>
    <property type="match status" value="1"/>
</dbReference>
<dbReference type="PROSITE" id="PS51196">
    <property type="entry name" value="SECA_MOTOR_DEAD"/>
    <property type="match status" value="1"/>
</dbReference>
<keyword id="KW-0067">ATP-binding</keyword>
<keyword id="KW-0150">Chloroplast</keyword>
<keyword id="KW-0472">Membrane</keyword>
<keyword id="KW-0547">Nucleotide-binding</keyword>
<keyword id="KW-0934">Plastid</keyword>
<keyword id="KW-0653">Protein transport</keyword>
<keyword id="KW-0793">Thylakoid</keyword>
<keyword id="KW-1278">Translocase</keyword>
<keyword id="KW-0811">Translocation</keyword>
<keyword id="KW-0813">Transport</keyword>
<geneLocation type="chloroplast"/>
<feature type="chain" id="PRO_0000109624" description="Protein translocase subunit SecA">
    <location>
        <begin position="1"/>
        <end position="884"/>
    </location>
</feature>
<feature type="binding site" evidence="1">
    <location>
        <position position="82"/>
    </location>
    <ligand>
        <name>ATP</name>
        <dbReference type="ChEBI" id="CHEBI:30616"/>
    </ligand>
</feature>
<feature type="binding site" evidence="1">
    <location>
        <begin position="100"/>
        <end position="104"/>
    </location>
    <ligand>
        <name>ATP</name>
        <dbReference type="ChEBI" id="CHEBI:30616"/>
    </ligand>
</feature>
<feature type="binding site" evidence="1">
    <location>
        <position position="491"/>
    </location>
    <ligand>
        <name>ATP</name>
        <dbReference type="ChEBI" id="CHEBI:30616"/>
    </ligand>
</feature>